<keyword id="KW-0963">Cytoplasm</keyword>
<keyword id="KW-0378">Hydrolase</keyword>
<keyword id="KW-0460">Magnesium</keyword>
<keyword id="KW-0479">Metal-binding</keyword>
<name>IPYR_XYLFA</name>
<organism>
    <name type="scientific">Xylella fastidiosa (strain 9a5c)</name>
    <dbReference type="NCBI Taxonomy" id="160492"/>
    <lineage>
        <taxon>Bacteria</taxon>
        <taxon>Pseudomonadati</taxon>
        <taxon>Pseudomonadota</taxon>
        <taxon>Gammaproteobacteria</taxon>
        <taxon>Lysobacterales</taxon>
        <taxon>Lysobacteraceae</taxon>
        <taxon>Xylella</taxon>
    </lineage>
</organism>
<feature type="chain" id="PRO_0000137544" description="Inorganic pyrophosphatase">
    <location>
        <begin position="1"/>
        <end position="178"/>
    </location>
</feature>
<feature type="binding site" evidence="1">
    <location>
        <position position="30"/>
    </location>
    <ligand>
        <name>substrate</name>
    </ligand>
</feature>
<feature type="binding site" evidence="1">
    <location>
        <position position="44"/>
    </location>
    <ligand>
        <name>substrate</name>
    </ligand>
</feature>
<feature type="binding site" evidence="1">
    <location>
        <position position="56"/>
    </location>
    <ligand>
        <name>substrate</name>
    </ligand>
</feature>
<feature type="binding site" evidence="1">
    <location>
        <position position="66"/>
    </location>
    <ligand>
        <name>Mg(2+)</name>
        <dbReference type="ChEBI" id="CHEBI:18420"/>
        <label>1</label>
    </ligand>
</feature>
<feature type="binding site" evidence="1">
    <location>
        <position position="71"/>
    </location>
    <ligand>
        <name>Mg(2+)</name>
        <dbReference type="ChEBI" id="CHEBI:18420"/>
        <label>1</label>
    </ligand>
</feature>
<feature type="binding site" evidence="1">
    <location>
        <position position="71"/>
    </location>
    <ligand>
        <name>Mg(2+)</name>
        <dbReference type="ChEBI" id="CHEBI:18420"/>
        <label>2</label>
    </ligand>
</feature>
<feature type="binding site" evidence="1">
    <location>
        <position position="103"/>
    </location>
    <ligand>
        <name>Mg(2+)</name>
        <dbReference type="ChEBI" id="CHEBI:18420"/>
        <label>1</label>
    </ligand>
</feature>
<feature type="binding site" evidence="1">
    <location>
        <position position="142"/>
    </location>
    <ligand>
        <name>substrate</name>
    </ligand>
</feature>
<evidence type="ECO:0000255" key="1">
    <source>
        <dbReference type="HAMAP-Rule" id="MF_00209"/>
    </source>
</evidence>
<gene>
    <name evidence="1" type="primary">ppa</name>
    <name type="ordered locus">XF_2171</name>
</gene>
<proteinExistence type="inferred from homology"/>
<protein>
    <recommendedName>
        <fullName evidence="1">Inorganic pyrophosphatase</fullName>
        <ecNumber evidence="1">3.6.1.1</ecNumber>
    </recommendedName>
    <alternativeName>
        <fullName evidence="1">Pyrophosphate phospho-hydrolase</fullName>
        <shortName evidence="1">PPase</shortName>
    </alternativeName>
</protein>
<dbReference type="EC" id="3.6.1.1" evidence="1"/>
<dbReference type="EMBL" id="AE003849">
    <property type="protein sequence ID" value="AAF84970.1"/>
    <property type="molecule type" value="Genomic_DNA"/>
</dbReference>
<dbReference type="PIR" id="H82589">
    <property type="entry name" value="H82589"/>
</dbReference>
<dbReference type="RefSeq" id="WP_004088597.1">
    <property type="nucleotide sequence ID" value="NC_002488.3"/>
</dbReference>
<dbReference type="SMR" id="P65750"/>
<dbReference type="STRING" id="160492.XF_2171"/>
<dbReference type="KEGG" id="xfa:XF_2171"/>
<dbReference type="eggNOG" id="COG0221">
    <property type="taxonomic scope" value="Bacteria"/>
</dbReference>
<dbReference type="HOGENOM" id="CLU_073198_1_0_6"/>
<dbReference type="Proteomes" id="UP000000812">
    <property type="component" value="Chromosome"/>
</dbReference>
<dbReference type="GO" id="GO:0005737">
    <property type="term" value="C:cytoplasm"/>
    <property type="evidence" value="ECO:0007669"/>
    <property type="project" value="UniProtKB-SubCell"/>
</dbReference>
<dbReference type="GO" id="GO:0004427">
    <property type="term" value="F:inorganic diphosphate phosphatase activity"/>
    <property type="evidence" value="ECO:0007669"/>
    <property type="project" value="UniProtKB-UniRule"/>
</dbReference>
<dbReference type="GO" id="GO:0000287">
    <property type="term" value="F:magnesium ion binding"/>
    <property type="evidence" value="ECO:0007669"/>
    <property type="project" value="UniProtKB-UniRule"/>
</dbReference>
<dbReference type="GO" id="GO:0006796">
    <property type="term" value="P:phosphate-containing compound metabolic process"/>
    <property type="evidence" value="ECO:0007669"/>
    <property type="project" value="InterPro"/>
</dbReference>
<dbReference type="CDD" id="cd00412">
    <property type="entry name" value="pyrophosphatase"/>
    <property type="match status" value="1"/>
</dbReference>
<dbReference type="FunFam" id="3.90.80.10:FF:000001">
    <property type="entry name" value="Inorganic pyrophosphatase"/>
    <property type="match status" value="1"/>
</dbReference>
<dbReference type="Gene3D" id="3.90.80.10">
    <property type="entry name" value="Inorganic pyrophosphatase"/>
    <property type="match status" value="1"/>
</dbReference>
<dbReference type="HAMAP" id="MF_00209">
    <property type="entry name" value="Inorganic_PPase"/>
    <property type="match status" value="1"/>
</dbReference>
<dbReference type="InterPro" id="IPR008162">
    <property type="entry name" value="Pyrophosphatase"/>
</dbReference>
<dbReference type="InterPro" id="IPR036649">
    <property type="entry name" value="Pyrophosphatase_sf"/>
</dbReference>
<dbReference type="NCBIfam" id="NF002317">
    <property type="entry name" value="PRK01250.1"/>
    <property type="match status" value="1"/>
</dbReference>
<dbReference type="PANTHER" id="PTHR10286">
    <property type="entry name" value="INORGANIC PYROPHOSPHATASE"/>
    <property type="match status" value="1"/>
</dbReference>
<dbReference type="Pfam" id="PF00719">
    <property type="entry name" value="Pyrophosphatase"/>
    <property type="match status" value="1"/>
</dbReference>
<dbReference type="SUPFAM" id="SSF50324">
    <property type="entry name" value="Inorganic pyrophosphatase"/>
    <property type="match status" value="1"/>
</dbReference>
<dbReference type="PROSITE" id="PS00387">
    <property type="entry name" value="PPASE"/>
    <property type="match status" value="1"/>
</dbReference>
<sequence length="178" mass="19793">MGLELVNAGNNLPEEINVIIEIPKDSEPVKYEVDKASGAIFVDRILSTPMRYPCNYGYVPNTLCGDGDPVDVMVVLPLPLVPGSVVRCRPVGVLQMKDEAGNDEKLLAVPVSKIFSGYSHIEDINQVSAHWLERIGHFFEHYKDLEKGKWVEIDGWGNATTAKQILTNAVQRYKDTLP</sequence>
<reference key="1">
    <citation type="journal article" date="2000" name="Nature">
        <title>The genome sequence of the plant pathogen Xylella fastidiosa.</title>
        <authorList>
            <person name="Simpson A.J.G."/>
            <person name="Reinach F.C."/>
            <person name="Arruda P."/>
            <person name="Abreu F.A."/>
            <person name="Acencio M."/>
            <person name="Alvarenga R."/>
            <person name="Alves L.M.C."/>
            <person name="Araya J.E."/>
            <person name="Baia G.S."/>
            <person name="Baptista C.S."/>
            <person name="Barros M.H."/>
            <person name="Bonaccorsi E.D."/>
            <person name="Bordin S."/>
            <person name="Bove J.M."/>
            <person name="Briones M.R.S."/>
            <person name="Bueno M.R.P."/>
            <person name="Camargo A.A."/>
            <person name="Camargo L.E.A."/>
            <person name="Carraro D.M."/>
            <person name="Carrer H."/>
            <person name="Colauto N.B."/>
            <person name="Colombo C."/>
            <person name="Costa F.F."/>
            <person name="Costa M.C.R."/>
            <person name="Costa-Neto C.M."/>
            <person name="Coutinho L.L."/>
            <person name="Cristofani M."/>
            <person name="Dias-Neto E."/>
            <person name="Docena C."/>
            <person name="El-Dorry H."/>
            <person name="Facincani A.P."/>
            <person name="Ferreira A.J.S."/>
            <person name="Ferreira V.C.A."/>
            <person name="Ferro J.A."/>
            <person name="Fraga J.S."/>
            <person name="Franca S.C."/>
            <person name="Franco M.C."/>
            <person name="Frohme M."/>
            <person name="Furlan L.R."/>
            <person name="Garnier M."/>
            <person name="Goldman G.H."/>
            <person name="Goldman M.H.S."/>
            <person name="Gomes S.L."/>
            <person name="Gruber A."/>
            <person name="Ho P.L."/>
            <person name="Hoheisel J.D."/>
            <person name="Junqueira M.L."/>
            <person name="Kemper E.L."/>
            <person name="Kitajima J.P."/>
            <person name="Krieger J.E."/>
            <person name="Kuramae E.E."/>
            <person name="Laigret F."/>
            <person name="Lambais M.R."/>
            <person name="Leite L.C.C."/>
            <person name="Lemos E.G.M."/>
            <person name="Lemos M.V.F."/>
            <person name="Lopes S.A."/>
            <person name="Lopes C.R."/>
            <person name="Machado J.A."/>
            <person name="Machado M.A."/>
            <person name="Madeira A.M.B.N."/>
            <person name="Madeira H.M.F."/>
            <person name="Marino C.L."/>
            <person name="Marques M.V."/>
            <person name="Martins E.A.L."/>
            <person name="Martins E.M.F."/>
            <person name="Matsukuma A.Y."/>
            <person name="Menck C.F.M."/>
            <person name="Miracca E.C."/>
            <person name="Miyaki C.Y."/>
            <person name="Monteiro-Vitorello C.B."/>
            <person name="Moon D.H."/>
            <person name="Nagai M.A."/>
            <person name="Nascimento A.L.T.O."/>
            <person name="Netto L.E.S."/>
            <person name="Nhani A. Jr."/>
            <person name="Nobrega F.G."/>
            <person name="Nunes L.R."/>
            <person name="Oliveira M.A."/>
            <person name="de Oliveira M.C."/>
            <person name="de Oliveira R.C."/>
            <person name="Palmieri D.A."/>
            <person name="Paris A."/>
            <person name="Peixoto B.R."/>
            <person name="Pereira G.A.G."/>
            <person name="Pereira H.A. Jr."/>
            <person name="Pesquero J.B."/>
            <person name="Quaggio R.B."/>
            <person name="Roberto P.G."/>
            <person name="Rodrigues V."/>
            <person name="de Rosa A.J.M."/>
            <person name="de Rosa V.E. Jr."/>
            <person name="de Sa R.G."/>
            <person name="Santelli R.V."/>
            <person name="Sawasaki H.E."/>
            <person name="da Silva A.C.R."/>
            <person name="da Silva A.M."/>
            <person name="da Silva F.R."/>
            <person name="Silva W.A. Jr."/>
            <person name="da Silveira J.F."/>
            <person name="Silvestri M.L.Z."/>
            <person name="Siqueira W.J."/>
            <person name="de Souza A.A."/>
            <person name="de Souza A.P."/>
            <person name="Terenzi M.F."/>
            <person name="Truffi D."/>
            <person name="Tsai S.M."/>
            <person name="Tsuhako M.H."/>
            <person name="Vallada H."/>
            <person name="Van Sluys M.A."/>
            <person name="Verjovski-Almeida S."/>
            <person name="Vettore A.L."/>
            <person name="Zago M.A."/>
            <person name="Zatz M."/>
            <person name="Meidanis J."/>
            <person name="Setubal J.C."/>
        </authorList>
    </citation>
    <scope>NUCLEOTIDE SEQUENCE [LARGE SCALE GENOMIC DNA]</scope>
    <source>
        <strain>9a5c</strain>
    </source>
</reference>
<accession>P65750</accession>
<accession>Q9PBH3</accession>
<comment type="function">
    <text evidence="1">Catalyzes the hydrolysis of inorganic pyrophosphate (PPi) forming two phosphate ions.</text>
</comment>
<comment type="catalytic activity">
    <reaction evidence="1">
        <text>diphosphate + H2O = 2 phosphate + H(+)</text>
        <dbReference type="Rhea" id="RHEA:24576"/>
        <dbReference type="ChEBI" id="CHEBI:15377"/>
        <dbReference type="ChEBI" id="CHEBI:15378"/>
        <dbReference type="ChEBI" id="CHEBI:33019"/>
        <dbReference type="ChEBI" id="CHEBI:43474"/>
        <dbReference type="EC" id="3.6.1.1"/>
    </reaction>
</comment>
<comment type="cofactor">
    <cofactor evidence="1">
        <name>Mg(2+)</name>
        <dbReference type="ChEBI" id="CHEBI:18420"/>
    </cofactor>
</comment>
<comment type="subunit">
    <text evidence="1">Homohexamer.</text>
</comment>
<comment type="subcellular location">
    <subcellularLocation>
        <location evidence="1">Cytoplasm</location>
    </subcellularLocation>
</comment>
<comment type="similarity">
    <text evidence="1">Belongs to the PPase family.</text>
</comment>